<organism>
    <name type="scientific">Mycobacterium bovis (strain ATCC BAA-935 / AF2122/97)</name>
    <dbReference type="NCBI Taxonomy" id="233413"/>
    <lineage>
        <taxon>Bacteria</taxon>
        <taxon>Bacillati</taxon>
        <taxon>Actinomycetota</taxon>
        <taxon>Actinomycetes</taxon>
        <taxon>Mycobacteriales</taxon>
        <taxon>Mycobacteriaceae</taxon>
        <taxon>Mycobacterium</taxon>
        <taxon>Mycobacterium tuberculosis complex</taxon>
    </lineage>
</organism>
<name>ESXR_MYCBO</name>
<protein>
    <recommendedName>
        <fullName evidence="1">ESAT-6-like protein EsxR</fullName>
    </recommendedName>
</protein>
<reference key="1">
    <citation type="journal article" date="2003" name="Proc. Natl. Acad. Sci. U.S.A.">
        <title>The complete genome sequence of Mycobacterium bovis.</title>
        <authorList>
            <person name="Garnier T."/>
            <person name="Eiglmeier K."/>
            <person name="Camus J.-C."/>
            <person name="Medina N."/>
            <person name="Mansoor H."/>
            <person name="Pryor M."/>
            <person name="Duthoy S."/>
            <person name="Grondin S."/>
            <person name="Lacroix C."/>
            <person name="Monsempe C."/>
            <person name="Simon S."/>
            <person name="Harris B."/>
            <person name="Atkin R."/>
            <person name="Doggett J."/>
            <person name="Mayes R."/>
            <person name="Keating L."/>
            <person name="Wheeler P.R."/>
            <person name="Parkhill J."/>
            <person name="Barrell B.G."/>
            <person name="Cole S.T."/>
            <person name="Gordon S.V."/>
            <person name="Hewinson R.G."/>
        </authorList>
    </citation>
    <scope>NUCLEOTIDE SEQUENCE [LARGE SCALE GENOMIC DNA]</scope>
    <source>
        <strain>ATCC BAA-935 / AF2122/97</strain>
    </source>
</reference>
<reference key="2">
    <citation type="journal article" date="2017" name="Genome Announc.">
        <title>Updated reference genome sequence and annotation of Mycobacterium bovis AF2122/97.</title>
        <authorList>
            <person name="Malone K.M."/>
            <person name="Farrell D."/>
            <person name="Stuber T.P."/>
            <person name="Schubert O.T."/>
            <person name="Aebersold R."/>
            <person name="Robbe-Austerman S."/>
            <person name="Gordon S.V."/>
        </authorList>
    </citation>
    <scope>NUCLEOTIDE SEQUENCE [LARGE SCALE GENOMIC DNA]</scope>
    <scope>GENOME REANNOTATION</scope>
    <source>
        <strain>ATCC BAA-935 / AF2122/97</strain>
    </source>
</reference>
<comment type="subcellular location">
    <subcellularLocation>
        <location evidence="1">Secreted</location>
    </subcellularLocation>
    <text evidence="1">Probably secreted via the ESX-3 / type VII secretion system (T7SS).</text>
</comment>
<comment type="similarity">
    <text evidence="2">Belongs to the WXG100 family. ESAT-6 subfamily.</text>
</comment>
<dbReference type="EMBL" id="LT708304">
    <property type="protein sequence ID" value="SIU01669.1"/>
    <property type="molecule type" value="Genomic_DNA"/>
</dbReference>
<dbReference type="RefSeq" id="NP_856690.1">
    <property type="nucleotide sequence ID" value="NC_002945.3"/>
</dbReference>
<dbReference type="RefSeq" id="WP_003415340.1">
    <property type="nucleotide sequence ID" value="NC_002945.4"/>
</dbReference>
<dbReference type="SMR" id="P64094"/>
<dbReference type="KEGG" id="mbo:BQ2027_MB3045C"/>
<dbReference type="PATRIC" id="fig|233413.5.peg.3346"/>
<dbReference type="Proteomes" id="UP000001419">
    <property type="component" value="Chromosome"/>
</dbReference>
<dbReference type="GO" id="GO:0005576">
    <property type="term" value="C:extracellular region"/>
    <property type="evidence" value="ECO:0007669"/>
    <property type="project" value="UniProtKB-SubCell"/>
</dbReference>
<dbReference type="FunFam" id="1.10.287.1060:FF:000016">
    <property type="entry name" value="ESAT-6-like protein"/>
    <property type="match status" value="1"/>
</dbReference>
<dbReference type="Gene3D" id="1.10.287.1060">
    <property type="entry name" value="ESAT-6-like"/>
    <property type="match status" value="1"/>
</dbReference>
<dbReference type="InterPro" id="IPR036689">
    <property type="entry name" value="ESAT-6-like_sf"/>
</dbReference>
<dbReference type="InterPro" id="IPR010310">
    <property type="entry name" value="T7SS_ESAT-6-like"/>
</dbReference>
<dbReference type="NCBIfam" id="TIGR03930">
    <property type="entry name" value="WXG100_ESAT6"/>
    <property type="match status" value="1"/>
</dbReference>
<dbReference type="Pfam" id="PF06013">
    <property type="entry name" value="WXG100"/>
    <property type="match status" value="1"/>
</dbReference>
<dbReference type="SUPFAM" id="SSF140453">
    <property type="entry name" value="EsxAB dimer-like"/>
    <property type="match status" value="1"/>
</dbReference>
<gene>
    <name evidence="1" type="primary">esxR</name>
    <name type="ordered locus">BQ2027_MB3045C</name>
</gene>
<proteinExistence type="inferred from homology"/>
<sequence>MSQIMYNYPAMMAHAGDMAGYAGTLQSLGADIASEQAVLSSAWQGDTGITYQGWQTQWNQALEDLVRAYQSMSGTHESNTMAMLARDGAEAAKWGG</sequence>
<evidence type="ECO:0000250" key="1">
    <source>
        <dbReference type="UniProtKB" id="P9WNI9"/>
    </source>
</evidence>
<evidence type="ECO:0000305" key="2"/>
<keyword id="KW-1185">Reference proteome</keyword>
<keyword id="KW-0964">Secreted</keyword>
<accession>P64094</accession>
<accession>A0A1R3Y2V6</accession>
<accession>O53266</accession>
<accession>X2BMG4</accession>
<feature type="chain" id="PRO_0000167811" description="ESAT-6-like protein EsxR">
    <location>
        <begin position="1"/>
        <end position="96"/>
    </location>
</feature>